<reference key="1">
    <citation type="journal article" date="1994" name="Cell">
        <title>Mutations in Hsp83 and cdc37 impair signaling by the sevenless receptor tyrosine kinase in Drosophila.</title>
        <authorList>
            <person name="Cutforth T."/>
            <person name="Rubin G.M."/>
        </authorList>
    </citation>
    <scope>NUCLEOTIDE SEQUENCE [GENOMIC DNA]</scope>
    <scope>FUNCTION</scope>
    <scope>SUBUNIT</scope>
</reference>
<reference key="2">
    <citation type="journal article" date="2000" name="Science">
        <title>The genome sequence of Drosophila melanogaster.</title>
        <authorList>
            <person name="Adams M.D."/>
            <person name="Celniker S.E."/>
            <person name="Holt R.A."/>
            <person name="Evans C.A."/>
            <person name="Gocayne J.D."/>
            <person name="Amanatides P.G."/>
            <person name="Scherer S.E."/>
            <person name="Li P.W."/>
            <person name="Hoskins R.A."/>
            <person name="Galle R.F."/>
            <person name="George R.A."/>
            <person name="Lewis S.E."/>
            <person name="Richards S."/>
            <person name="Ashburner M."/>
            <person name="Henderson S.N."/>
            <person name="Sutton G.G."/>
            <person name="Wortman J.R."/>
            <person name="Yandell M.D."/>
            <person name="Zhang Q."/>
            <person name="Chen L.X."/>
            <person name="Brandon R.C."/>
            <person name="Rogers Y.-H.C."/>
            <person name="Blazej R.G."/>
            <person name="Champe M."/>
            <person name="Pfeiffer B.D."/>
            <person name="Wan K.H."/>
            <person name="Doyle C."/>
            <person name="Baxter E.G."/>
            <person name="Helt G."/>
            <person name="Nelson C.R."/>
            <person name="Miklos G.L.G."/>
            <person name="Abril J.F."/>
            <person name="Agbayani A."/>
            <person name="An H.-J."/>
            <person name="Andrews-Pfannkoch C."/>
            <person name="Baldwin D."/>
            <person name="Ballew R.M."/>
            <person name="Basu A."/>
            <person name="Baxendale J."/>
            <person name="Bayraktaroglu L."/>
            <person name="Beasley E.M."/>
            <person name="Beeson K.Y."/>
            <person name="Benos P.V."/>
            <person name="Berman B.P."/>
            <person name="Bhandari D."/>
            <person name="Bolshakov S."/>
            <person name="Borkova D."/>
            <person name="Botchan M.R."/>
            <person name="Bouck J."/>
            <person name="Brokstein P."/>
            <person name="Brottier P."/>
            <person name="Burtis K.C."/>
            <person name="Busam D.A."/>
            <person name="Butler H."/>
            <person name="Cadieu E."/>
            <person name="Center A."/>
            <person name="Chandra I."/>
            <person name="Cherry J.M."/>
            <person name="Cawley S."/>
            <person name="Dahlke C."/>
            <person name="Davenport L.B."/>
            <person name="Davies P."/>
            <person name="de Pablos B."/>
            <person name="Delcher A."/>
            <person name="Deng Z."/>
            <person name="Mays A.D."/>
            <person name="Dew I."/>
            <person name="Dietz S.M."/>
            <person name="Dodson K."/>
            <person name="Doup L.E."/>
            <person name="Downes M."/>
            <person name="Dugan-Rocha S."/>
            <person name="Dunkov B.C."/>
            <person name="Dunn P."/>
            <person name="Durbin K.J."/>
            <person name="Evangelista C.C."/>
            <person name="Ferraz C."/>
            <person name="Ferriera S."/>
            <person name="Fleischmann W."/>
            <person name="Fosler C."/>
            <person name="Gabrielian A.E."/>
            <person name="Garg N.S."/>
            <person name="Gelbart W.M."/>
            <person name="Glasser K."/>
            <person name="Glodek A."/>
            <person name="Gong F."/>
            <person name="Gorrell J.H."/>
            <person name="Gu Z."/>
            <person name="Guan P."/>
            <person name="Harris M."/>
            <person name="Harris N.L."/>
            <person name="Harvey D.A."/>
            <person name="Heiman T.J."/>
            <person name="Hernandez J.R."/>
            <person name="Houck J."/>
            <person name="Hostin D."/>
            <person name="Houston K.A."/>
            <person name="Howland T.J."/>
            <person name="Wei M.-H."/>
            <person name="Ibegwam C."/>
            <person name="Jalali M."/>
            <person name="Kalush F."/>
            <person name="Karpen G.H."/>
            <person name="Ke Z."/>
            <person name="Kennison J.A."/>
            <person name="Ketchum K.A."/>
            <person name="Kimmel B.E."/>
            <person name="Kodira C.D."/>
            <person name="Kraft C.L."/>
            <person name="Kravitz S."/>
            <person name="Kulp D."/>
            <person name="Lai Z."/>
            <person name="Lasko P."/>
            <person name="Lei Y."/>
            <person name="Levitsky A.A."/>
            <person name="Li J.H."/>
            <person name="Li Z."/>
            <person name="Liang Y."/>
            <person name="Lin X."/>
            <person name="Liu X."/>
            <person name="Mattei B."/>
            <person name="McIntosh T.C."/>
            <person name="McLeod M.P."/>
            <person name="McPherson D."/>
            <person name="Merkulov G."/>
            <person name="Milshina N.V."/>
            <person name="Mobarry C."/>
            <person name="Morris J."/>
            <person name="Moshrefi A."/>
            <person name="Mount S.M."/>
            <person name="Moy M."/>
            <person name="Murphy B."/>
            <person name="Murphy L."/>
            <person name="Muzny D.M."/>
            <person name="Nelson D.L."/>
            <person name="Nelson D.R."/>
            <person name="Nelson K.A."/>
            <person name="Nixon K."/>
            <person name="Nusskern D.R."/>
            <person name="Pacleb J.M."/>
            <person name="Palazzolo M."/>
            <person name="Pittman G.S."/>
            <person name="Pan S."/>
            <person name="Pollard J."/>
            <person name="Puri V."/>
            <person name="Reese M.G."/>
            <person name="Reinert K."/>
            <person name="Remington K."/>
            <person name="Saunders R.D.C."/>
            <person name="Scheeler F."/>
            <person name="Shen H."/>
            <person name="Shue B.C."/>
            <person name="Siden-Kiamos I."/>
            <person name="Simpson M."/>
            <person name="Skupski M.P."/>
            <person name="Smith T.J."/>
            <person name="Spier E."/>
            <person name="Spradling A.C."/>
            <person name="Stapleton M."/>
            <person name="Strong R."/>
            <person name="Sun E."/>
            <person name="Svirskas R."/>
            <person name="Tector C."/>
            <person name="Turner R."/>
            <person name="Venter E."/>
            <person name="Wang A.H."/>
            <person name="Wang X."/>
            <person name="Wang Z.-Y."/>
            <person name="Wassarman D.A."/>
            <person name="Weinstock G.M."/>
            <person name="Weissenbach J."/>
            <person name="Williams S.M."/>
            <person name="Woodage T."/>
            <person name="Worley K.C."/>
            <person name="Wu D."/>
            <person name="Yang S."/>
            <person name="Yao Q.A."/>
            <person name="Ye J."/>
            <person name="Yeh R.-F."/>
            <person name="Zaveri J.S."/>
            <person name="Zhan M."/>
            <person name="Zhang G."/>
            <person name="Zhao Q."/>
            <person name="Zheng L."/>
            <person name="Zheng X.H."/>
            <person name="Zhong F.N."/>
            <person name="Zhong W."/>
            <person name="Zhou X."/>
            <person name="Zhu S.C."/>
            <person name="Zhu X."/>
            <person name="Smith H.O."/>
            <person name="Gibbs R.A."/>
            <person name="Myers E.W."/>
            <person name="Rubin G.M."/>
            <person name="Venter J.C."/>
        </authorList>
    </citation>
    <scope>NUCLEOTIDE SEQUENCE [LARGE SCALE GENOMIC DNA]</scope>
    <source>
        <strain>Berkeley</strain>
    </source>
</reference>
<reference key="3">
    <citation type="journal article" date="2002" name="Genome Biol.">
        <title>Annotation of the Drosophila melanogaster euchromatic genome: a systematic review.</title>
        <authorList>
            <person name="Misra S."/>
            <person name="Crosby M.A."/>
            <person name="Mungall C.J."/>
            <person name="Matthews B.B."/>
            <person name="Campbell K.S."/>
            <person name="Hradecky P."/>
            <person name="Huang Y."/>
            <person name="Kaminker J.S."/>
            <person name="Millburn G.H."/>
            <person name="Prochnik S.E."/>
            <person name="Smith C.D."/>
            <person name="Tupy J.L."/>
            <person name="Whitfield E.J."/>
            <person name="Bayraktaroglu L."/>
            <person name="Berman B.P."/>
            <person name="Bettencourt B.R."/>
            <person name="Celniker S.E."/>
            <person name="de Grey A.D.N.J."/>
            <person name="Drysdale R.A."/>
            <person name="Harris N.L."/>
            <person name="Richter J."/>
            <person name="Russo S."/>
            <person name="Schroeder A.J."/>
            <person name="Shu S.Q."/>
            <person name="Stapleton M."/>
            <person name="Yamada C."/>
            <person name="Ashburner M."/>
            <person name="Gelbart W.M."/>
            <person name="Rubin G.M."/>
            <person name="Lewis S.E."/>
        </authorList>
    </citation>
    <scope>GENOME REANNOTATION</scope>
    <source>
        <strain>Berkeley</strain>
    </source>
</reference>
<reference key="4">
    <citation type="journal article" date="2002" name="EMBO J.">
        <title>Cdc37 is essential for chromosome segregation and cytokinesis in higher eukaryotes.</title>
        <authorList>
            <person name="Lange B.M.H."/>
            <person name="Rebollo E."/>
            <person name="Herold A."/>
            <person name="Gonzalez C."/>
        </authorList>
    </citation>
    <scope>FUNCTION</scope>
    <scope>INTERACTION WITH AURB</scope>
</reference>
<reference key="5">
    <citation type="journal article" date="2007" name="Mol. Biosyst.">
        <title>An integrated chemical, mass spectrometric and computational strategy for (quantitative) phosphoproteomics: application to Drosophila melanogaster Kc167 cells.</title>
        <authorList>
            <person name="Bodenmiller B."/>
            <person name="Mueller L.N."/>
            <person name="Pedrioli P.G.A."/>
            <person name="Pflieger D."/>
            <person name="Juenger M.A."/>
            <person name="Eng J.K."/>
            <person name="Aebersold R."/>
            <person name="Tao W.A."/>
        </authorList>
    </citation>
    <scope>PHOSPHORYLATION [LARGE SCALE ANALYSIS] AT SER-13 AND SER-296</scope>
    <scope>IDENTIFICATION BY MASS SPECTROMETRY</scope>
</reference>
<reference key="6">
    <citation type="journal article" date="2008" name="J. Proteome Res.">
        <title>Phosphoproteome analysis of Drosophila melanogaster embryos.</title>
        <authorList>
            <person name="Zhai B."/>
            <person name="Villen J."/>
            <person name="Beausoleil S.A."/>
            <person name="Mintseris J."/>
            <person name="Gygi S.P."/>
        </authorList>
    </citation>
    <scope>PHOSPHORYLATION [LARGE SCALE ANALYSIS] AT SER-13; THR-19 AND SER-355</scope>
    <scope>IDENTIFICATION BY MASS SPECTROMETRY</scope>
    <source>
        <tissue>Embryo</tissue>
    </source>
</reference>
<proteinExistence type="evidence at protein level"/>
<protein>
    <recommendedName>
        <fullName>Hsp90 co-chaperone Cdc37</fullName>
    </recommendedName>
    <alternativeName>
        <fullName>Hsp90 chaperone protein kinase-targeting subunit</fullName>
    </alternativeName>
    <alternativeName>
        <fullName>Protein enhancer of sevenless 3B</fullName>
    </alternativeName>
</protein>
<name>CDC37_DROME</name>
<evidence type="ECO:0000250" key="1"/>
<evidence type="ECO:0000256" key="2">
    <source>
        <dbReference type="SAM" id="MobiDB-lite"/>
    </source>
</evidence>
<evidence type="ECO:0000269" key="3">
    <source>
    </source>
</evidence>
<evidence type="ECO:0000269" key="4">
    <source>
    </source>
</evidence>
<evidence type="ECO:0000269" key="5">
    <source>
    </source>
</evidence>
<evidence type="ECO:0000269" key="6">
    <source>
    </source>
</evidence>
<evidence type="ECO:0000305" key="7"/>
<dbReference type="EMBL" id="L32839">
    <property type="protein sequence ID" value="AAA28414.1"/>
    <property type="molecule type" value="Genomic_DNA"/>
</dbReference>
<dbReference type="EMBL" id="AE014296">
    <property type="protein sequence ID" value="AAF47571.1"/>
    <property type="molecule type" value="Genomic_DNA"/>
</dbReference>
<dbReference type="RefSeq" id="NP_477006.1">
    <property type="nucleotide sequence ID" value="NM_057658.5"/>
</dbReference>
<dbReference type="SMR" id="Q24276"/>
<dbReference type="BioGRID" id="63764">
    <property type="interactions" value="37"/>
</dbReference>
<dbReference type="DIP" id="DIP-20334N"/>
<dbReference type="FunCoup" id="Q24276">
    <property type="interactions" value="2163"/>
</dbReference>
<dbReference type="IntAct" id="Q24276">
    <property type="interactions" value="35"/>
</dbReference>
<dbReference type="STRING" id="7227.FBpp0072660"/>
<dbReference type="iPTMnet" id="Q24276"/>
<dbReference type="PaxDb" id="7227-FBpp0072660"/>
<dbReference type="DNASU" id="38232"/>
<dbReference type="EnsemblMetazoa" id="FBtr0072777">
    <property type="protein sequence ID" value="FBpp0072660"/>
    <property type="gene ID" value="FBgn0011573"/>
</dbReference>
<dbReference type="GeneID" id="38232"/>
<dbReference type="KEGG" id="dme:Dmel_CG12019"/>
<dbReference type="AGR" id="FB:FBgn0011573"/>
<dbReference type="CTD" id="11140"/>
<dbReference type="FlyBase" id="FBgn0011573">
    <property type="gene designation" value="Cdc37"/>
</dbReference>
<dbReference type="VEuPathDB" id="VectorBase:FBgn0011573"/>
<dbReference type="eggNOG" id="KOG2260">
    <property type="taxonomic scope" value="Eukaryota"/>
</dbReference>
<dbReference type="GeneTree" id="ENSGT00390000013443"/>
<dbReference type="HOGENOM" id="CLU_046495_0_0_1"/>
<dbReference type="InParanoid" id="Q24276"/>
<dbReference type="OMA" id="AEQCIII"/>
<dbReference type="OrthoDB" id="440202at2759"/>
<dbReference type="PhylomeDB" id="Q24276"/>
<dbReference type="Reactome" id="R-DME-114608">
    <property type="pathway name" value="Platelet degranulation"/>
</dbReference>
<dbReference type="Reactome" id="R-DME-1227986">
    <property type="pathway name" value="Signaling by ERBB2"/>
</dbReference>
<dbReference type="Reactome" id="R-DME-8863795">
    <property type="pathway name" value="Downregulation of ERBB2 signaling"/>
</dbReference>
<dbReference type="Reactome" id="R-DME-9013418">
    <property type="pathway name" value="RHOBTB2 GTPase cycle"/>
</dbReference>
<dbReference type="Reactome" id="R-DME-9652282">
    <property type="pathway name" value="Drug-mediated inhibition of ERBB2 signaling"/>
</dbReference>
<dbReference type="SignaLink" id="Q24276"/>
<dbReference type="BioGRID-ORCS" id="38232">
    <property type="hits" value="0 hits in 3 CRISPR screens"/>
</dbReference>
<dbReference type="GenomeRNAi" id="38232"/>
<dbReference type="PRO" id="PR:Q24276"/>
<dbReference type="Proteomes" id="UP000000803">
    <property type="component" value="Chromosome 3L"/>
</dbReference>
<dbReference type="Bgee" id="FBgn0011573">
    <property type="expression patterns" value="Expressed in embryonic/larval hemocyte (Drosophila) and 159 other cell types or tissues"/>
</dbReference>
<dbReference type="ExpressionAtlas" id="Q24276">
    <property type="expression patterns" value="baseline and differential"/>
</dbReference>
<dbReference type="GO" id="GO:0005737">
    <property type="term" value="C:cytoplasm"/>
    <property type="evidence" value="ECO:0000250"/>
    <property type="project" value="UniProtKB"/>
</dbReference>
<dbReference type="GO" id="GO:0031072">
    <property type="term" value="F:heat shock protein binding"/>
    <property type="evidence" value="ECO:0000318"/>
    <property type="project" value="GO_Central"/>
</dbReference>
<dbReference type="GO" id="GO:0005158">
    <property type="term" value="F:insulin receptor binding"/>
    <property type="evidence" value="ECO:0000314"/>
    <property type="project" value="FlyBase"/>
</dbReference>
<dbReference type="GO" id="GO:0019901">
    <property type="term" value="F:protein kinase binding"/>
    <property type="evidence" value="ECO:0007669"/>
    <property type="project" value="InterPro"/>
</dbReference>
<dbReference type="GO" id="GO:0030296">
    <property type="term" value="F:protein tyrosine kinase activator activity"/>
    <property type="evidence" value="ECO:0000303"/>
    <property type="project" value="UniProtKB"/>
</dbReference>
<dbReference type="GO" id="GO:0051087">
    <property type="term" value="F:protein-folding chaperone binding"/>
    <property type="evidence" value="ECO:0000318"/>
    <property type="project" value="GO_Central"/>
</dbReference>
<dbReference type="GO" id="GO:0051082">
    <property type="term" value="F:unfolded protein binding"/>
    <property type="evidence" value="ECO:0000318"/>
    <property type="project" value="GO_Central"/>
</dbReference>
<dbReference type="GO" id="GO:0051301">
    <property type="term" value="P:cell division"/>
    <property type="evidence" value="ECO:0007669"/>
    <property type="project" value="UniProtKB-KW"/>
</dbReference>
<dbReference type="GO" id="GO:0007059">
    <property type="term" value="P:chromosome segregation"/>
    <property type="evidence" value="ECO:0007669"/>
    <property type="project" value="UniProtKB-KW"/>
</dbReference>
<dbReference type="GO" id="GO:0035556">
    <property type="term" value="P:intracellular signal transduction"/>
    <property type="evidence" value="ECO:0000303"/>
    <property type="project" value="UniProtKB"/>
</dbReference>
<dbReference type="GO" id="GO:0051321">
    <property type="term" value="P:meiotic cell cycle"/>
    <property type="evidence" value="ECO:0007669"/>
    <property type="project" value="UniProtKB-KW"/>
</dbReference>
<dbReference type="GO" id="GO:0070374">
    <property type="term" value="P:positive regulation of ERK1 and ERK2 cascade"/>
    <property type="evidence" value="ECO:0007003"/>
    <property type="project" value="FlyBase"/>
</dbReference>
<dbReference type="GO" id="GO:0046628">
    <property type="term" value="P:positive regulation of insulin receptor signaling pathway"/>
    <property type="evidence" value="ECO:0000316"/>
    <property type="project" value="FlyBase"/>
</dbReference>
<dbReference type="GO" id="GO:0002052">
    <property type="term" value="P:positive regulation of neuroblast proliferation"/>
    <property type="evidence" value="ECO:0000315"/>
    <property type="project" value="FlyBase"/>
</dbReference>
<dbReference type="GO" id="GO:0006457">
    <property type="term" value="P:protein folding"/>
    <property type="evidence" value="ECO:0000318"/>
    <property type="project" value="GO_Central"/>
</dbReference>
<dbReference type="GO" id="GO:0050821">
    <property type="term" value="P:protein stabilization"/>
    <property type="evidence" value="ECO:0000318"/>
    <property type="project" value="GO_Central"/>
</dbReference>
<dbReference type="FunFam" id="1.20.58.610:FF:000001">
    <property type="entry name" value="Hsp90 co-chaperone Cdc37-like 1"/>
    <property type="match status" value="1"/>
</dbReference>
<dbReference type="Gene3D" id="6.10.140.250">
    <property type="match status" value="1"/>
</dbReference>
<dbReference type="Gene3D" id="1.20.58.610">
    <property type="entry name" value="Cdc37, Hsp90 binding domain"/>
    <property type="match status" value="1"/>
</dbReference>
<dbReference type="InterPro" id="IPR004918">
    <property type="entry name" value="Cdc37"/>
</dbReference>
<dbReference type="InterPro" id="IPR013873">
    <property type="entry name" value="Cdc37_C"/>
</dbReference>
<dbReference type="InterPro" id="IPR013874">
    <property type="entry name" value="Cdc37_Hsp90-bd"/>
</dbReference>
<dbReference type="InterPro" id="IPR038189">
    <property type="entry name" value="Cdc37_Hsp90-bd_sf"/>
</dbReference>
<dbReference type="InterPro" id="IPR013855">
    <property type="entry name" value="Cdc37_N_dom"/>
</dbReference>
<dbReference type="PANTHER" id="PTHR12800">
    <property type="entry name" value="CDC37-RELATED"/>
    <property type="match status" value="1"/>
</dbReference>
<dbReference type="PANTHER" id="PTHR12800:SF4">
    <property type="entry name" value="HSP90 CO-CHAPERONE CDC37"/>
    <property type="match status" value="1"/>
</dbReference>
<dbReference type="Pfam" id="PF08564">
    <property type="entry name" value="CDC37_C"/>
    <property type="match status" value="1"/>
</dbReference>
<dbReference type="Pfam" id="PF08565">
    <property type="entry name" value="CDC37_M"/>
    <property type="match status" value="1"/>
</dbReference>
<dbReference type="Pfam" id="PF03234">
    <property type="entry name" value="CDC37_N"/>
    <property type="match status" value="1"/>
</dbReference>
<dbReference type="SMART" id="SM01069">
    <property type="entry name" value="CDC37_C"/>
    <property type="match status" value="1"/>
</dbReference>
<dbReference type="SMART" id="SM01070">
    <property type="entry name" value="CDC37_M"/>
    <property type="match status" value="1"/>
</dbReference>
<dbReference type="SMART" id="SM01071">
    <property type="entry name" value="CDC37_N"/>
    <property type="match status" value="1"/>
</dbReference>
<dbReference type="SUPFAM" id="SSF101391">
    <property type="entry name" value="Hsp90 co-chaperone CDC37"/>
    <property type="match status" value="1"/>
</dbReference>
<keyword id="KW-0131">Cell cycle</keyword>
<keyword id="KW-0132">Cell division</keyword>
<keyword id="KW-0143">Chaperone</keyword>
<keyword id="KW-0159">Chromosome partition</keyword>
<keyword id="KW-0963">Cytoplasm</keyword>
<keyword id="KW-0217">Developmental protein</keyword>
<keyword id="KW-0469">Meiosis</keyword>
<keyword id="KW-0498">Mitosis</keyword>
<keyword id="KW-0597">Phosphoprotein</keyword>
<keyword id="KW-1185">Reference proteome</keyword>
<accession>Q24276</accession>
<sequence length="389" mass="45150">MVDYSKWKNIEISDDEDDTHPNIDTPSLFRWRHQARVERMAEMDHEKDELKKKRQSYQARLMDVKERISKKDGDEEALKKELEKIEAEGKELDRIESEMIKKEKKTPWNVDTISKPGFEKTVINKKAGRKPDENLSEEEREQRMKQFVKENEKLCQQYGMLRKYDDSKRFLQEHLHLVGEETANYLVIWSINLEMEEKHELMAHVAHQCICMQYILELAKQLDVDPRACVSSFFSKIQHCHPEYRAQFDSEIEGFKGRIQKRAQEKIQEAIAQAEEEERKERLGPGGLDPADVFESLPDELKACFESRDVELLQKTIAAMPVDVAKLHMKRCVDSGLWVPNAADLEGDKKEEDDSDDVAGGEEKTDDAKSESAAKEEPIYTGVSTEDVD</sequence>
<organism>
    <name type="scientific">Drosophila melanogaster</name>
    <name type="common">Fruit fly</name>
    <dbReference type="NCBI Taxonomy" id="7227"/>
    <lineage>
        <taxon>Eukaryota</taxon>
        <taxon>Metazoa</taxon>
        <taxon>Ecdysozoa</taxon>
        <taxon>Arthropoda</taxon>
        <taxon>Hexapoda</taxon>
        <taxon>Insecta</taxon>
        <taxon>Pterygota</taxon>
        <taxon>Neoptera</taxon>
        <taxon>Endopterygota</taxon>
        <taxon>Diptera</taxon>
        <taxon>Brachycera</taxon>
        <taxon>Muscomorpha</taxon>
        <taxon>Ephydroidea</taxon>
        <taxon>Drosophilidae</taxon>
        <taxon>Drosophila</taxon>
        <taxon>Sophophora</taxon>
    </lineage>
</organism>
<gene>
    <name type="primary">Cdc37</name>
    <name type="synonym">E(sev)3B</name>
    <name type="ORF">CG12019</name>
</gene>
<feature type="chain" id="PRO_0000195063" description="Hsp90 co-chaperone Cdc37">
    <location>
        <begin position="1"/>
        <end position="389"/>
    </location>
</feature>
<feature type="region of interest" description="Disordered" evidence="2">
    <location>
        <begin position="1"/>
        <end position="26"/>
    </location>
</feature>
<feature type="region of interest" description="Disordered" evidence="2">
    <location>
        <begin position="342"/>
        <end position="389"/>
    </location>
</feature>
<feature type="compositionally biased region" description="Basic and acidic residues" evidence="2">
    <location>
        <begin position="1"/>
        <end position="11"/>
    </location>
</feature>
<feature type="compositionally biased region" description="Basic and acidic residues" evidence="2">
    <location>
        <begin position="361"/>
        <end position="378"/>
    </location>
</feature>
<feature type="modified residue" description="Phosphoserine" evidence="4 5">
    <location>
        <position position="13"/>
    </location>
</feature>
<feature type="modified residue" description="Phosphothreonine" evidence="5">
    <location>
        <position position="19"/>
    </location>
</feature>
<feature type="modified residue" description="Phosphoserine" evidence="4">
    <location>
        <position position="296"/>
    </location>
</feature>
<feature type="modified residue" description="Phosphoserine" evidence="5">
    <location>
        <position position="355"/>
    </location>
</feature>
<comment type="function">
    <text evidence="3 6">Co-chaperone that binds to numerous kinases and promotes their interaction with the Hsp90 complex, resulting in stabilization and promotion of their activity. Required for cytokinesis and chromosome segregation in mitosis and male meiosis.</text>
</comment>
<comment type="subunit">
    <text evidence="3 6">Forms a complex with Hsp90. Interacts with a number of kinases such as Cdk1, sev and aurB.</text>
</comment>
<comment type="interaction">
    <interactant intactId="EBI-167469">
        <id>Q24276</id>
    </interactant>
    <interactant intactId="EBI-118907">
        <id>Q01071</id>
        <label>E(spl)mdelta-HLH</label>
    </interactant>
    <organismsDiffer>false</organismsDiffer>
    <experiments>3</experiments>
</comment>
<comment type="interaction">
    <interactant intactId="EBI-167469">
        <id>Q24276</id>
    </interactant>
    <interactant intactId="EBI-466629">
        <id>P91656</id>
        <label>S6k</label>
    </interactant>
    <organismsDiffer>false</organismsDiffer>
    <experiments>3</experiments>
</comment>
<comment type="interaction">
    <interactant intactId="EBI-167469">
        <id>Q24276</id>
    </interactant>
    <interactant intactId="EBI-89929">
        <id>Q9Y0H4</id>
        <label>Su(dx)</label>
    </interactant>
    <organismsDiffer>false</organismsDiffer>
    <experiments>3</experiments>
</comment>
<comment type="subcellular location">
    <subcellularLocation>
        <location evidence="1">Cytoplasm</location>
    </subcellularLocation>
</comment>
<comment type="similarity">
    <text evidence="7">Belongs to the CDC37 family.</text>
</comment>